<feature type="chain" id="PRO_1000115703" description="Glutaminase">
    <location>
        <begin position="1"/>
        <end position="311"/>
    </location>
</feature>
<feature type="binding site" evidence="1">
    <location>
        <position position="66"/>
    </location>
    <ligand>
        <name>substrate</name>
    </ligand>
</feature>
<feature type="binding site" evidence="1">
    <location>
        <position position="116"/>
    </location>
    <ligand>
        <name>substrate</name>
    </ligand>
</feature>
<feature type="binding site" evidence="1">
    <location>
        <position position="162"/>
    </location>
    <ligand>
        <name>substrate</name>
    </ligand>
</feature>
<feature type="binding site" evidence="1">
    <location>
        <position position="169"/>
    </location>
    <ligand>
        <name>substrate</name>
    </ligand>
</feature>
<feature type="binding site" evidence="1">
    <location>
        <position position="193"/>
    </location>
    <ligand>
        <name>substrate</name>
    </ligand>
</feature>
<feature type="binding site" evidence="1">
    <location>
        <position position="245"/>
    </location>
    <ligand>
        <name>substrate</name>
    </ligand>
</feature>
<feature type="binding site" evidence="1">
    <location>
        <position position="263"/>
    </location>
    <ligand>
        <name>substrate</name>
    </ligand>
</feature>
<keyword id="KW-0378">Hydrolase</keyword>
<sequence length="311" mass="32984">MSNQLLDRVVAEIADEMAQRADRGEVASYIPQLARVDPKAFGLAVIGADGHIAAAGDADVPFSIQSISKVFTLTLALGKAGDRLWRRVGREPSGSAFNSIVQLEHERGIPRNPFINAGAIAVTDLILSGHQPREALGEILRFMQFLAGDSSIAIDEAVAKSEQRTGFRNAALANYMKSFGVLDNPVEYTLGVYFHHCAIAMSCRQLAMAGRFLAHNGQNPSTGLNVVSSERARRINALMLTCGHYDGSGEFAYRVGLPGKSGVGGGILAVAPGRASIAVWAPGLDAAGNSHLGRVALEGLTKRMGWSIFGV</sequence>
<gene>
    <name evidence="1" type="primary">glsA</name>
    <name type="ordered locus">Rpal_4692</name>
</gene>
<evidence type="ECO:0000255" key="1">
    <source>
        <dbReference type="HAMAP-Rule" id="MF_00313"/>
    </source>
</evidence>
<protein>
    <recommendedName>
        <fullName evidence="1">Glutaminase</fullName>
        <ecNumber evidence="1">3.5.1.2</ecNumber>
    </recommendedName>
</protein>
<dbReference type="EC" id="3.5.1.2" evidence="1"/>
<dbReference type="EMBL" id="CP001096">
    <property type="protein sequence ID" value="ACF03183.1"/>
    <property type="molecule type" value="Genomic_DNA"/>
</dbReference>
<dbReference type="RefSeq" id="WP_012497458.1">
    <property type="nucleotide sequence ID" value="NC_011004.1"/>
</dbReference>
<dbReference type="SMR" id="B3QKT6"/>
<dbReference type="KEGG" id="rpt:Rpal_4692"/>
<dbReference type="HOGENOM" id="CLU_027932_1_1_5"/>
<dbReference type="OrthoDB" id="9788822at2"/>
<dbReference type="Proteomes" id="UP000001725">
    <property type="component" value="Chromosome"/>
</dbReference>
<dbReference type="GO" id="GO:0004359">
    <property type="term" value="F:glutaminase activity"/>
    <property type="evidence" value="ECO:0007669"/>
    <property type="project" value="UniProtKB-UniRule"/>
</dbReference>
<dbReference type="GO" id="GO:0006537">
    <property type="term" value="P:glutamate biosynthetic process"/>
    <property type="evidence" value="ECO:0007669"/>
    <property type="project" value="TreeGrafter"/>
</dbReference>
<dbReference type="GO" id="GO:0006543">
    <property type="term" value="P:glutamine catabolic process"/>
    <property type="evidence" value="ECO:0007669"/>
    <property type="project" value="TreeGrafter"/>
</dbReference>
<dbReference type="FunFam" id="3.40.710.10:FF:000005">
    <property type="entry name" value="Glutaminase"/>
    <property type="match status" value="1"/>
</dbReference>
<dbReference type="Gene3D" id="3.40.710.10">
    <property type="entry name" value="DD-peptidase/beta-lactamase superfamily"/>
    <property type="match status" value="1"/>
</dbReference>
<dbReference type="HAMAP" id="MF_00313">
    <property type="entry name" value="Glutaminase"/>
    <property type="match status" value="1"/>
</dbReference>
<dbReference type="InterPro" id="IPR012338">
    <property type="entry name" value="Beta-lactam/transpept-like"/>
</dbReference>
<dbReference type="InterPro" id="IPR015868">
    <property type="entry name" value="Glutaminase"/>
</dbReference>
<dbReference type="NCBIfam" id="TIGR03814">
    <property type="entry name" value="Gln_ase"/>
    <property type="match status" value="1"/>
</dbReference>
<dbReference type="NCBIfam" id="NF002133">
    <property type="entry name" value="PRK00971.1-2"/>
    <property type="match status" value="1"/>
</dbReference>
<dbReference type="PANTHER" id="PTHR12544">
    <property type="entry name" value="GLUTAMINASE"/>
    <property type="match status" value="1"/>
</dbReference>
<dbReference type="PANTHER" id="PTHR12544:SF29">
    <property type="entry name" value="GLUTAMINASE"/>
    <property type="match status" value="1"/>
</dbReference>
<dbReference type="Pfam" id="PF04960">
    <property type="entry name" value="Glutaminase"/>
    <property type="match status" value="1"/>
</dbReference>
<dbReference type="SUPFAM" id="SSF56601">
    <property type="entry name" value="beta-lactamase/transpeptidase-like"/>
    <property type="match status" value="1"/>
</dbReference>
<proteinExistence type="inferred from homology"/>
<accession>B3QKT6</accession>
<reference key="1">
    <citation type="submission" date="2008-05" db="EMBL/GenBank/DDBJ databases">
        <title>Complete sequence of Rhodopseudomonas palustris TIE-1.</title>
        <authorList>
            <consortium name="US DOE Joint Genome Institute"/>
            <person name="Lucas S."/>
            <person name="Copeland A."/>
            <person name="Lapidus A."/>
            <person name="Glavina del Rio T."/>
            <person name="Dalin E."/>
            <person name="Tice H."/>
            <person name="Pitluck S."/>
            <person name="Chain P."/>
            <person name="Malfatti S."/>
            <person name="Shin M."/>
            <person name="Vergez L."/>
            <person name="Lang D."/>
            <person name="Schmutz J."/>
            <person name="Larimer F."/>
            <person name="Land M."/>
            <person name="Hauser L."/>
            <person name="Kyrpides N."/>
            <person name="Mikhailova N."/>
            <person name="Emerson D."/>
            <person name="Newman D.K."/>
            <person name="Roden E."/>
            <person name="Richardson P."/>
        </authorList>
    </citation>
    <scope>NUCLEOTIDE SEQUENCE [LARGE SCALE GENOMIC DNA]</scope>
    <source>
        <strain>TIE-1</strain>
    </source>
</reference>
<organism>
    <name type="scientific">Rhodopseudomonas palustris (strain TIE-1)</name>
    <dbReference type="NCBI Taxonomy" id="395960"/>
    <lineage>
        <taxon>Bacteria</taxon>
        <taxon>Pseudomonadati</taxon>
        <taxon>Pseudomonadota</taxon>
        <taxon>Alphaproteobacteria</taxon>
        <taxon>Hyphomicrobiales</taxon>
        <taxon>Nitrobacteraceae</taxon>
        <taxon>Rhodopseudomonas</taxon>
    </lineage>
</organism>
<name>GLSA_RHOPT</name>
<comment type="catalytic activity">
    <reaction evidence="1">
        <text>L-glutamine + H2O = L-glutamate + NH4(+)</text>
        <dbReference type="Rhea" id="RHEA:15889"/>
        <dbReference type="ChEBI" id="CHEBI:15377"/>
        <dbReference type="ChEBI" id="CHEBI:28938"/>
        <dbReference type="ChEBI" id="CHEBI:29985"/>
        <dbReference type="ChEBI" id="CHEBI:58359"/>
        <dbReference type="EC" id="3.5.1.2"/>
    </reaction>
</comment>
<comment type="subunit">
    <text evidence="1">Homotetramer.</text>
</comment>
<comment type="similarity">
    <text evidence="1">Belongs to the glutaminase family.</text>
</comment>